<comment type="function">
    <text evidence="1">Catalyzes the NADPH-dependent reduction of glyoxylate and hydroxypyruvate into glycolate and glycerate, respectively.</text>
</comment>
<comment type="catalytic activity">
    <reaction evidence="1">
        <text>glycolate + NADP(+) = glyoxylate + NADPH + H(+)</text>
        <dbReference type="Rhea" id="RHEA:10992"/>
        <dbReference type="ChEBI" id="CHEBI:15378"/>
        <dbReference type="ChEBI" id="CHEBI:29805"/>
        <dbReference type="ChEBI" id="CHEBI:36655"/>
        <dbReference type="ChEBI" id="CHEBI:57783"/>
        <dbReference type="ChEBI" id="CHEBI:58349"/>
        <dbReference type="EC" id="1.1.1.79"/>
    </reaction>
</comment>
<comment type="catalytic activity">
    <reaction evidence="1">
        <text>(R)-glycerate + NAD(+) = 3-hydroxypyruvate + NADH + H(+)</text>
        <dbReference type="Rhea" id="RHEA:17905"/>
        <dbReference type="ChEBI" id="CHEBI:15378"/>
        <dbReference type="ChEBI" id="CHEBI:16659"/>
        <dbReference type="ChEBI" id="CHEBI:17180"/>
        <dbReference type="ChEBI" id="CHEBI:57540"/>
        <dbReference type="ChEBI" id="CHEBI:57945"/>
        <dbReference type="EC" id="1.1.1.81"/>
    </reaction>
</comment>
<comment type="catalytic activity">
    <reaction evidence="1">
        <text>(R)-glycerate + NADP(+) = 3-hydroxypyruvate + NADPH + H(+)</text>
        <dbReference type="Rhea" id="RHEA:18657"/>
        <dbReference type="ChEBI" id="CHEBI:15378"/>
        <dbReference type="ChEBI" id="CHEBI:16659"/>
        <dbReference type="ChEBI" id="CHEBI:17180"/>
        <dbReference type="ChEBI" id="CHEBI:57783"/>
        <dbReference type="ChEBI" id="CHEBI:58349"/>
        <dbReference type="EC" id="1.1.1.81"/>
    </reaction>
</comment>
<comment type="subcellular location">
    <subcellularLocation>
        <location evidence="1">Cytoplasm</location>
    </subcellularLocation>
</comment>
<comment type="similarity">
    <text evidence="1">Belongs to the D-isomer specific 2-hydroxyacid dehydrogenase family. GhrA subfamily.</text>
</comment>
<name>GHRA_ECOSE</name>
<dbReference type="EC" id="1.1.1.79" evidence="1"/>
<dbReference type="EC" id="1.1.1.81" evidence="1"/>
<dbReference type="EMBL" id="AP009240">
    <property type="protein sequence ID" value="BAG76619.1"/>
    <property type="molecule type" value="Genomic_DNA"/>
</dbReference>
<dbReference type="RefSeq" id="WP_000351317.1">
    <property type="nucleotide sequence ID" value="NC_011415.1"/>
</dbReference>
<dbReference type="SMR" id="B6I9A9"/>
<dbReference type="GeneID" id="93776385"/>
<dbReference type="KEGG" id="ecy:ECSE_1095"/>
<dbReference type="HOGENOM" id="CLU_019796_1_0_6"/>
<dbReference type="Proteomes" id="UP000008199">
    <property type="component" value="Chromosome"/>
</dbReference>
<dbReference type="GO" id="GO:0005829">
    <property type="term" value="C:cytosol"/>
    <property type="evidence" value="ECO:0007669"/>
    <property type="project" value="UniProtKB-ARBA"/>
</dbReference>
<dbReference type="GO" id="GO:0030267">
    <property type="term" value="F:glyoxylate reductase (NADPH) activity"/>
    <property type="evidence" value="ECO:0007669"/>
    <property type="project" value="UniProtKB-UniRule"/>
</dbReference>
<dbReference type="GO" id="GO:0008465">
    <property type="term" value="F:hydroxypyruvate reductase (NADH) activity"/>
    <property type="evidence" value="ECO:0007669"/>
    <property type="project" value="RHEA"/>
</dbReference>
<dbReference type="GO" id="GO:0120509">
    <property type="term" value="F:hydroxypyruvate reductase (NADPH) activity"/>
    <property type="evidence" value="ECO:0007669"/>
    <property type="project" value="RHEA"/>
</dbReference>
<dbReference type="GO" id="GO:0051287">
    <property type="term" value="F:NAD binding"/>
    <property type="evidence" value="ECO:0007669"/>
    <property type="project" value="InterPro"/>
</dbReference>
<dbReference type="CDD" id="cd12164">
    <property type="entry name" value="GDH_like_2"/>
    <property type="match status" value="1"/>
</dbReference>
<dbReference type="FunFam" id="3.40.50.720:FF:000110">
    <property type="entry name" value="Glyoxylate/hydroxypyruvate reductase A"/>
    <property type="match status" value="1"/>
</dbReference>
<dbReference type="Gene3D" id="3.40.50.720">
    <property type="entry name" value="NAD(P)-binding Rossmann-like Domain"/>
    <property type="match status" value="2"/>
</dbReference>
<dbReference type="HAMAP" id="MF_01666">
    <property type="entry name" value="2_Hacid_dh_C_GhrA"/>
    <property type="match status" value="1"/>
</dbReference>
<dbReference type="InterPro" id="IPR029753">
    <property type="entry name" value="D-isomer_DH_CS"/>
</dbReference>
<dbReference type="InterPro" id="IPR006140">
    <property type="entry name" value="D-isomer_DH_NAD-bd"/>
</dbReference>
<dbReference type="InterPro" id="IPR023514">
    <property type="entry name" value="GhrA_Enterobacterales"/>
</dbReference>
<dbReference type="InterPro" id="IPR036291">
    <property type="entry name" value="NAD(P)-bd_dom_sf"/>
</dbReference>
<dbReference type="NCBIfam" id="NF012013">
    <property type="entry name" value="PRK15469.1"/>
    <property type="match status" value="1"/>
</dbReference>
<dbReference type="PANTHER" id="PTHR43333">
    <property type="entry name" value="2-HACID_DH_C DOMAIN-CONTAINING PROTEIN"/>
    <property type="match status" value="1"/>
</dbReference>
<dbReference type="PANTHER" id="PTHR43333:SF1">
    <property type="entry name" value="D-ISOMER SPECIFIC 2-HYDROXYACID DEHYDROGENASE NAD-BINDING DOMAIN-CONTAINING PROTEIN"/>
    <property type="match status" value="1"/>
</dbReference>
<dbReference type="Pfam" id="PF02826">
    <property type="entry name" value="2-Hacid_dh_C"/>
    <property type="match status" value="1"/>
</dbReference>
<dbReference type="SUPFAM" id="SSF51735">
    <property type="entry name" value="NAD(P)-binding Rossmann-fold domains"/>
    <property type="match status" value="1"/>
</dbReference>
<dbReference type="PROSITE" id="PS00671">
    <property type="entry name" value="D_2_HYDROXYACID_DH_3"/>
    <property type="match status" value="1"/>
</dbReference>
<feature type="chain" id="PRO_1000187270" description="Glyoxylate/hydroxypyruvate reductase A">
    <location>
        <begin position="1"/>
        <end position="312"/>
    </location>
</feature>
<feature type="active site" evidence="1">
    <location>
        <position position="227"/>
    </location>
</feature>
<feature type="active site" description="Proton donor" evidence="1">
    <location>
        <position position="275"/>
    </location>
</feature>
<organism>
    <name type="scientific">Escherichia coli (strain SE11)</name>
    <dbReference type="NCBI Taxonomy" id="409438"/>
    <lineage>
        <taxon>Bacteria</taxon>
        <taxon>Pseudomonadati</taxon>
        <taxon>Pseudomonadota</taxon>
        <taxon>Gammaproteobacteria</taxon>
        <taxon>Enterobacterales</taxon>
        <taxon>Enterobacteriaceae</taxon>
        <taxon>Escherichia</taxon>
    </lineage>
</organism>
<reference key="1">
    <citation type="journal article" date="2008" name="DNA Res.">
        <title>Complete genome sequence and comparative analysis of the wild-type commensal Escherichia coli strain SE11 isolated from a healthy adult.</title>
        <authorList>
            <person name="Oshima K."/>
            <person name="Toh H."/>
            <person name="Ogura Y."/>
            <person name="Sasamoto H."/>
            <person name="Morita H."/>
            <person name="Park S.-H."/>
            <person name="Ooka T."/>
            <person name="Iyoda S."/>
            <person name="Taylor T.D."/>
            <person name="Hayashi T."/>
            <person name="Itoh K."/>
            <person name="Hattori M."/>
        </authorList>
    </citation>
    <scope>NUCLEOTIDE SEQUENCE [LARGE SCALE GENOMIC DNA]</scope>
    <source>
        <strain>SE11</strain>
    </source>
</reference>
<sequence length="312" mass="35343">MDIIFYHPTFDTQWWIEALRKAIPQARVRAWKSGDNDSADYALVWHPPVEMLAGRDLKAVFALGAGVDSILSKLQAHPEMLNPSVPLFRLEDTGMGEQMQEYAVSQVLHWFRRFDDYRIQQNSSHWQPLPEYHREDFTIGILGAGVLGSKVAQSLQTWRFPLRCWSRTRKSWPGVQSFAGREELSAFLSQCRVLINLLPNTPETVGIINQQLLEKLPDGAYLLNLARGVHVVEDDLLAALDSGKVKGAMLDVFNREPLPPESPLWQHPRVTITPHVAAITRPAEAVEYISRTIAQLEKGERVCGQVDRARGY</sequence>
<gene>
    <name evidence="1" type="primary">ghrA</name>
    <name type="ordered locus">ECSE_1095</name>
</gene>
<protein>
    <recommendedName>
        <fullName evidence="1">Glyoxylate/hydroxypyruvate reductase A</fullName>
        <ecNumber evidence="1">1.1.1.79</ecNumber>
        <ecNumber evidence="1">1.1.1.81</ecNumber>
    </recommendedName>
    <alternativeName>
        <fullName evidence="1">2-ketoacid reductase</fullName>
    </alternativeName>
</protein>
<keyword id="KW-0963">Cytoplasm</keyword>
<keyword id="KW-0520">NAD</keyword>
<keyword id="KW-0521">NADP</keyword>
<keyword id="KW-0560">Oxidoreductase</keyword>
<accession>B6I9A9</accession>
<proteinExistence type="inferred from homology"/>
<evidence type="ECO:0000255" key="1">
    <source>
        <dbReference type="HAMAP-Rule" id="MF_01666"/>
    </source>
</evidence>